<sequence length="206" mass="22269">MDLTVKTLEGKDAGKVSLSDAIFGLEPREDIIARVVRWQLAKRQQGTHKAKGRAEVARTGAKMYKQKGTGRARHHSARAPQFRGGGKAHGPVVRSHAHDLPKKVRALGLRHALSAKLKAEEIIVLDDLVANEAKTKALAGAFASLGLTNALIIGGAEIENNFKLAAQNIPNVDVLPVQGINVYDILRRGKLVLSKAAVEALEERFK</sequence>
<feature type="chain" id="PRO_1000166020" description="Large ribosomal subunit protein uL4">
    <location>
        <begin position="1"/>
        <end position="206"/>
    </location>
</feature>
<feature type="region of interest" description="Disordered" evidence="2">
    <location>
        <begin position="63"/>
        <end position="93"/>
    </location>
</feature>
<feature type="compositionally biased region" description="Basic residues" evidence="2">
    <location>
        <begin position="64"/>
        <end position="77"/>
    </location>
</feature>
<organism>
    <name type="scientific">Sinorhizobium fredii (strain NBRC 101917 / NGR234)</name>
    <dbReference type="NCBI Taxonomy" id="394"/>
    <lineage>
        <taxon>Bacteria</taxon>
        <taxon>Pseudomonadati</taxon>
        <taxon>Pseudomonadota</taxon>
        <taxon>Alphaproteobacteria</taxon>
        <taxon>Hyphomicrobiales</taxon>
        <taxon>Rhizobiaceae</taxon>
        <taxon>Sinorhizobium/Ensifer group</taxon>
        <taxon>Sinorhizobium</taxon>
    </lineage>
</organism>
<comment type="function">
    <text evidence="1">One of the primary rRNA binding proteins, this protein initially binds near the 5'-end of the 23S rRNA. It is important during the early stages of 50S assembly. It makes multiple contacts with different domains of the 23S rRNA in the assembled 50S subunit and ribosome.</text>
</comment>
<comment type="function">
    <text evidence="1">Forms part of the polypeptide exit tunnel.</text>
</comment>
<comment type="subunit">
    <text evidence="1">Part of the 50S ribosomal subunit.</text>
</comment>
<comment type="similarity">
    <text evidence="1">Belongs to the universal ribosomal protein uL4 family.</text>
</comment>
<protein>
    <recommendedName>
        <fullName evidence="1">Large ribosomal subunit protein uL4</fullName>
    </recommendedName>
    <alternativeName>
        <fullName evidence="3">50S ribosomal protein L4</fullName>
    </alternativeName>
</protein>
<keyword id="KW-1185">Reference proteome</keyword>
<keyword id="KW-0687">Ribonucleoprotein</keyword>
<keyword id="KW-0689">Ribosomal protein</keyword>
<keyword id="KW-0694">RNA-binding</keyword>
<keyword id="KW-0699">rRNA-binding</keyword>
<dbReference type="EMBL" id="CP001389">
    <property type="protein sequence ID" value="ACP24974.1"/>
    <property type="molecule type" value="Genomic_DNA"/>
</dbReference>
<dbReference type="RefSeq" id="WP_012707755.1">
    <property type="nucleotide sequence ID" value="NC_012587.1"/>
</dbReference>
<dbReference type="RefSeq" id="YP_002825727.1">
    <property type="nucleotide sequence ID" value="NC_012587.1"/>
</dbReference>
<dbReference type="SMR" id="C3MAY1"/>
<dbReference type="STRING" id="394.NGR_c11920"/>
<dbReference type="KEGG" id="rhi:NGR_c11920"/>
<dbReference type="PATRIC" id="fig|394.7.peg.4008"/>
<dbReference type="eggNOG" id="COG0088">
    <property type="taxonomic scope" value="Bacteria"/>
</dbReference>
<dbReference type="HOGENOM" id="CLU_041575_5_1_5"/>
<dbReference type="OrthoDB" id="9803201at2"/>
<dbReference type="Proteomes" id="UP000001054">
    <property type="component" value="Chromosome"/>
</dbReference>
<dbReference type="GO" id="GO:1990904">
    <property type="term" value="C:ribonucleoprotein complex"/>
    <property type="evidence" value="ECO:0007669"/>
    <property type="project" value="UniProtKB-KW"/>
</dbReference>
<dbReference type="GO" id="GO:0005840">
    <property type="term" value="C:ribosome"/>
    <property type="evidence" value="ECO:0007669"/>
    <property type="project" value="UniProtKB-KW"/>
</dbReference>
<dbReference type="GO" id="GO:0019843">
    <property type="term" value="F:rRNA binding"/>
    <property type="evidence" value="ECO:0007669"/>
    <property type="project" value="UniProtKB-UniRule"/>
</dbReference>
<dbReference type="GO" id="GO:0003735">
    <property type="term" value="F:structural constituent of ribosome"/>
    <property type="evidence" value="ECO:0007669"/>
    <property type="project" value="InterPro"/>
</dbReference>
<dbReference type="GO" id="GO:0006412">
    <property type="term" value="P:translation"/>
    <property type="evidence" value="ECO:0007669"/>
    <property type="project" value="UniProtKB-UniRule"/>
</dbReference>
<dbReference type="Gene3D" id="3.40.1370.10">
    <property type="match status" value="1"/>
</dbReference>
<dbReference type="HAMAP" id="MF_01328_B">
    <property type="entry name" value="Ribosomal_uL4_B"/>
    <property type="match status" value="1"/>
</dbReference>
<dbReference type="InterPro" id="IPR002136">
    <property type="entry name" value="Ribosomal_uL4"/>
</dbReference>
<dbReference type="InterPro" id="IPR013005">
    <property type="entry name" value="Ribosomal_uL4-like"/>
</dbReference>
<dbReference type="InterPro" id="IPR023574">
    <property type="entry name" value="Ribosomal_uL4_dom_sf"/>
</dbReference>
<dbReference type="NCBIfam" id="TIGR03953">
    <property type="entry name" value="rplD_bact"/>
    <property type="match status" value="1"/>
</dbReference>
<dbReference type="PANTHER" id="PTHR10746">
    <property type="entry name" value="50S RIBOSOMAL PROTEIN L4"/>
    <property type="match status" value="1"/>
</dbReference>
<dbReference type="PANTHER" id="PTHR10746:SF6">
    <property type="entry name" value="LARGE RIBOSOMAL SUBUNIT PROTEIN UL4M"/>
    <property type="match status" value="1"/>
</dbReference>
<dbReference type="Pfam" id="PF00573">
    <property type="entry name" value="Ribosomal_L4"/>
    <property type="match status" value="1"/>
</dbReference>
<dbReference type="SUPFAM" id="SSF52166">
    <property type="entry name" value="Ribosomal protein L4"/>
    <property type="match status" value="1"/>
</dbReference>
<accession>C3MAY1</accession>
<reference key="1">
    <citation type="journal article" date="2009" name="Appl. Environ. Microbiol.">
        <title>Rhizobium sp. strain NGR234 possesses a remarkable number of secretion systems.</title>
        <authorList>
            <person name="Schmeisser C."/>
            <person name="Liesegang H."/>
            <person name="Krysciak D."/>
            <person name="Bakkou N."/>
            <person name="Le Quere A."/>
            <person name="Wollherr A."/>
            <person name="Heinemeyer I."/>
            <person name="Morgenstern B."/>
            <person name="Pommerening-Roeser A."/>
            <person name="Flores M."/>
            <person name="Palacios R."/>
            <person name="Brenner S."/>
            <person name="Gottschalk G."/>
            <person name="Schmitz R.A."/>
            <person name="Broughton W.J."/>
            <person name="Perret X."/>
            <person name="Strittmatter A.W."/>
            <person name="Streit W.R."/>
        </authorList>
    </citation>
    <scope>NUCLEOTIDE SEQUENCE [LARGE SCALE GENOMIC DNA]</scope>
    <source>
        <strain>NBRC 101917 / NGR234</strain>
    </source>
</reference>
<evidence type="ECO:0000255" key="1">
    <source>
        <dbReference type="HAMAP-Rule" id="MF_01328"/>
    </source>
</evidence>
<evidence type="ECO:0000256" key="2">
    <source>
        <dbReference type="SAM" id="MobiDB-lite"/>
    </source>
</evidence>
<evidence type="ECO:0000305" key="3"/>
<name>RL4_SINFN</name>
<proteinExistence type="inferred from homology"/>
<gene>
    <name evidence="1" type="primary">rplD</name>
    <name type="ordered locus">NGR_c11920</name>
</gene>